<accession>Q5FKM6</accession>
<reference key="1">
    <citation type="journal article" date="2005" name="Proc. Natl. Acad. Sci. U.S.A.">
        <title>Complete genome sequence of the probiotic lactic acid bacterium Lactobacillus acidophilus NCFM.</title>
        <authorList>
            <person name="Altermann E."/>
            <person name="Russell W.M."/>
            <person name="Azcarate-Peril M.A."/>
            <person name="Barrangou R."/>
            <person name="Buck B.L."/>
            <person name="McAuliffe O."/>
            <person name="Souther N."/>
            <person name="Dobson A."/>
            <person name="Duong T."/>
            <person name="Callanan M."/>
            <person name="Lick S."/>
            <person name="Hamrick A."/>
            <person name="Cano R."/>
            <person name="Klaenhammer T.R."/>
        </authorList>
    </citation>
    <scope>NUCLEOTIDE SEQUENCE [LARGE SCALE GENOMIC DNA]</scope>
    <source>
        <strain>ATCC 700396 / NCK56 / N2 / NCFM</strain>
    </source>
</reference>
<protein>
    <recommendedName>
        <fullName evidence="1">Enolase</fullName>
        <ecNumber evidence="1">4.2.1.11</ecNumber>
    </recommendedName>
    <alternativeName>
        <fullName evidence="1">2-phospho-D-glycerate hydro-lyase</fullName>
    </alternativeName>
    <alternativeName>
        <fullName evidence="1">2-phosphoglycerate dehydratase</fullName>
    </alternativeName>
</protein>
<keyword id="KW-0963">Cytoplasm</keyword>
<keyword id="KW-0324">Glycolysis</keyword>
<keyword id="KW-0456">Lyase</keyword>
<keyword id="KW-0460">Magnesium</keyword>
<keyword id="KW-0479">Metal-binding</keyword>
<keyword id="KW-1185">Reference proteome</keyword>
<keyword id="KW-0964">Secreted</keyword>
<gene>
    <name evidence="1" type="primary">eno</name>
    <name type="ordered locus">LBA0889</name>
</gene>
<proteinExistence type="inferred from homology"/>
<evidence type="ECO:0000255" key="1">
    <source>
        <dbReference type="HAMAP-Rule" id="MF_00318"/>
    </source>
</evidence>
<sequence length="428" mass="46625">MLKSVIENVHALEIFDSRGNPTVEVHVTLSNGVVGKAEVPSGASTGENEAVELRDGGSRLGGKGVSKAVNNVNTEINDALKGMDPFDQPKIDQTMIDLDGTPNKGRLGANAILGVSMATAVAAANANRQPLYRYLGGIDLEMPQTFHNVINGGEHADNGIDIQEFMITPIAKTSFRDGFEKIVNVYHTLKKVLEDMGYETGLGDEGGFAPNMKNSEEALKALHESIIKAGYKPGEDIGIACDCAASYFYNKEDGKYHLEGKVLTDDELAAYYDKLLDEFPELMSMEDPYDENDVEGMVKFTATHKDRIQIVLDDFICTNPALLKKAIKEGAGNASLIKLNQIGTVTETLETIRMSRKNGYNTMISHRSGETGDTFIADLAVAINGGQLKTGAPARSERVEKYNRLLEIEEELGKGERLAFFPDDVDHD</sequence>
<comment type="function">
    <text evidence="1">Catalyzes the reversible conversion of 2-phosphoglycerate (2-PG) into phosphoenolpyruvate (PEP). It is essential for the degradation of carbohydrates via glycolysis.</text>
</comment>
<comment type="catalytic activity">
    <reaction evidence="1">
        <text>(2R)-2-phosphoglycerate = phosphoenolpyruvate + H2O</text>
        <dbReference type="Rhea" id="RHEA:10164"/>
        <dbReference type="ChEBI" id="CHEBI:15377"/>
        <dbReference type="ChEBI" id="CHEBI:58289"/>
        <dbReference type="ChEBI" id="CHEBI:58702"/>
        <dbReference type="EC" id="4.2.1.11"/>
    </reaction>
</comment>
<comment type="cofactor">
    <cofactor evidence="1">
        <name>Mg(2+)</name>
        <dbReference type="ChEBI" id="CHEBI:18420"/>
    </cofactor>
    <text evidence="1">Binds a second Mg(2+) ion via substrate during catalysis.</text>
</comment>
<comment type="pathway">
    <text evidence="1">Carbohydrate degradation; glycolysis; pyruvate from D-glyceraldehyde 3-phosphate: step 4/5.</text>
</comment>
<comment type="subcellular location">
    <subcellularLocation>
        <location evidence="1">Cytoplasm</location>
    </subcellularLocation>
    <subcellularLocation>
        <location evidence="1">Secreted</location>
    </subcellularLocation>
    <subcellularLocation>
        <location evidence="1">Cell surface</location>
    </subcellularLocation>
    <text evidence="1">Fractions of enolase are present in both the cytoplasm and on the cell surface.</text>
</comment>
<comment type="similarity">
    <text evidence="1">Belongs to the enolase family.</text>
</comment>
<dbReference type="EC" id="4.2.1.11" evidence="1"/>
<dbReference type="EMBL" id="CP000033">
    <property type="protein sequence ID" value="AAV42748.1"/>
    <property type="molecule type" value="Genomic_DNA"/>
</dbReference>
<dbReference type="RefSeq" id="WP_003546959.1">
    <property type="nucleotide sequence ID" value="NC_006814.3"/>
</dbReference>
<dbReference type="RefSeq" id="YP_193779.1">
    <property type="nucleotide sequence ID" value="NC_006814.3"/>
</dbReference>
<dbReference type="SMR" id="Q5FKM6"/>
<dbReference type="STRING" id="272621.LBA0889"/>
<dbReference type="GeneID" id="93289990"/>
<dbReference type="KEGG" id="lac:LBA0889"/>
<dbReference type="PATRIC" id="fig|272621.13.peg.849"/>
<dbReference type="eggNOG" id="COG0148">
    <property type="taxonomic scope" value="Bacteria"/>
</dbReference>
<dbReference type="HOGENOM" id="CLU_031223_2_1_9"/>
<dbReference type="OrthoDB" id="9804716at2"/>
<dbReference type="BioCyc" id="LACI272621:G1G49-897-MONOMER"/>
<dbReference type="UniPathway" id="UPA00109">
    <property type="reaction ID" value="UER00187"/>
</dbReference>
<dbReference type="Proteomes" id="UP000006381">
    <property type="component" value="Chromosome"/>
</dbReference>
<dbReference type="GO" id="GO:0009986">
    <property type="term" value="C:cell surface"/>
    <property type="evidence" value="ECO:0007669"/>
    <property type="project" value="UniProtKB-SubCell"/>
</dbReference>
<dbReference type="GO" id="GO:0005576">
    <property type="term" value="C:extracellular region"/>
    <property type="evidence" value="ECO:0007669"/>
    <property type="project" value="UniProtKB-SubCell"/>
</dbReference>
<dbReference type="GO" id="GO:0000015">
    <property type="term" value="C:phosphopyruvate hydratase complex"/>
    <property type="evidence" value="ECO:0007669"/>
    <property type="project" value="InterPro"/>
</dbReference>
<dbReference type="GO" id="GO:0000287">
    <property type="term" value="F:magnesium ion binding"/>
    <property type="evidence" value="ECO:0007669"/>
    <property type="project" value="UniProtKB-UniRule"/>
</dbReference>
<dbReference type="GO" id="GO:0004634">
    <property type="term" value="F:phosphopyruvate hydratase activity"/>
    <property type="evidence" value="ECO:0007669"/>
    <property type="project" value="UniProtKB-UniRule"/>
</dbReference>
<dbReference type="GO" id="GO:0006096">
    <property type="term" value="P:glycolytic process"/>
    <property type="evidence" value="ECO:0007669"/>
    <property type="project" value="UniProtKB-UniRule"/>
</dbReference>
<dbReference type="CDD" id="cd03313">
    <property type="entry name" value="enolase"/>
    <property type="match status" value="1"/>
</dbReference>
<dbReference type="FunFam" id="3.20.20.120:FF:000014">
    <property type="entry name" value="Enolase"/>
    <property type="match status" value="1"/>
</dbReference>
<dbReference type="FunFam" id="3.30.390.10:FF:000001">
    <property type="entry name" value="Enolase"/>
    <property type="match status" value="1"/>
</dbReference>
<dbReference type="Gene3D" id="3.20.20.120">
    <property type="entry name" value="Enolase-like C-terminal domain"/>
    <property type="match status" value="1"/>
</dbReference>
<dbReference type="Gene3D" id="3.30.390.10">
    <property type="entry name" value="Enolase-like, N-terminal domain"/>
    <property type="match status" value="1"/>
</dbReference>
<dbReference type="HAMAP" id="MF_00318">
    <property type="entry name" value="Enolase"/>
    <property type="match status" value="1"/>
</dbReference>
<dbReference type="InterPro" id="IPR000941">
    <property type="entry name" value="Enolase"/>
</dbReference>
<dbReference type="InterPro" id="IPR036849">
    <property type="entry name" value="Enolase-like_C_sf"/>
</dbReference>
<dbReference type="InterPro" id="IPR029017">
    <property type="entry name" value="Enolase-like_N"/>
</dbReference>
<dbReference type="InterPro" id="IPR020810">
    <property type="entry name" value="Enolase_C"/>
</dbReference>
<dbReference type="InterPro" id="IPR020809">
    <property type="entry name" value="Enolase_CS"/>
</dbReference>
<dbReference type="InterPro" id="IPR020811">
    <property type="entry name" value="Enolase_N"/>
</dbReference>
<dbReference type="NCBIfam" id="TIGR01060">
    <property type="entry name" value="eno"/>
    <property type="match status" value="1"/>
</dbReference>
<dbReference type="PANTHER" id="PTHR11902">
    <property type="entry name" value="ENOLASE"/>
    <property type="match status" value="1"/>
</dbReference>
<dbReference type="PANTHER" id="PTHR11902:SF1">
    <property type="entry name" value="ENOLASE"/>
    <property type="match status" value="1"/>
</dbReference>
<dbReference type="Pfam" id="PF00113">
    <property type="entry name" value="Enolase_C"/>
    <property type="match status" value="1"/>
</dbReference>
<dbReference type="Pfam" id="PF03952">
    <property type="entry name" value="Enolase_N"/>
    <property type="match status" value="1"/>
</dbReference>
<dbReference type="PIRSF" id="PIRSF001400">
    <property type="entry name" value="Enolase"/>
    <property type="match status" value="1"/>
</dbReference>
<dbReference type="PRINTS" id="PR00148">
    <property type="entry name" value="ENOLASE"/>
</dbReference>
<dbReference type="SFLD" id="SFLDS00001">
    <property type="entry name" value="Enolase"/>
    <property type="match status" value="1"/>
</dbReference>
<dbReference type="SFLD" id="SFLDF00002">
    <property type="entry name" value="enolase"/>
    <property type="match status" value="1"/>
</dbReference>
<dbReference type="SMART" id="SM01192">
    <property type="entry name" value="Enolase_C"/>
    <property type="match status" value="1"/>
</dbReference>
<dbReference type="SMART" id="SM01193">
    <property type="entry name" value="Enolase_N"/>
    <property type="match status" value="1"/>
</dbReference>
<dbReference type="SUPFAM" id="SSF51604">
    <property type="entry name" value="Enolase C-terminal domain-like"/>
    <property type="match status" value="1"/>
</dbReference>
<dbReference type="SUPFAM" id="SSF54826">
    <property type="entry name" value="Enolase N-terminal domain-like"/>
    <property type="match status" value="1"/>
</dbReference>
<dbReference type="PROSITE" id="PS00164">
    <property type="entry name" value="ENOLASE"/>
    <property type="match status" value="1"/>
</dbReference>
<organism>
    <name type="scientific">Lactobacillus acidophilus (strain ATCC 700396 / NCK56 / N2 / NCFM)</name>
    <dbReference type="NCBI Taxonomy" id="272621"/>
    <lineage>
        <taxon>Bacteria</taxon>
        <taxon>Bacillati</taxon>
        <taxon>Bacillota</taxon>
        <taxon>Bacilli</taxon>
        <taxon>Lactobacillales</taxon>
        <taxon>Lactobacillaceae</taxon>
        <taxon>Lactobacillus</taxon>
    </lineage>
</organism>
<name>ENO_LACAC</name>
<feature type="chain" id="PRO_0000133900" description="Enolase">
    <location>
        <begin position="1"/>
        <end position="428"/>
    </location>
</feature>
<feature type="active site" description="Proton donor" evidence="1">
    <location>
        <position position="205"/>
    </location>
</feature>
<feature type="active site" description="Proton acceptor" evidence="1">
    <location>
        <position position="338"/>
    </location>
</feature>
<feature type="binding site" evidence="1">
    <location>
        <position position="163"/>
    </location>
    <ligand>
        <name>(2R)-2-phosphoglycerate</name>
        <dbReference type="ChEBI" id="CHEBI:58289"/>
    </ligand>
</feature>
<feature type="binding site" evidence="1">
    <location>
        <position position="242"/>
    </location>
    <ligand>
        <name>Mg(2+)</name>
        <dbReference type="ChEBI" id="CHEBI:18420"/>
    </ligand>
</feature>
<feature type="binding site" evidence="1">
    <location>
        <position position="286"/>
    </location>
    <ligand>
        <name>Mg(2+)</name>
        <dbReference type="ChEBI" id="CHEBI:18420"/>
    </ligand>
</feature>
<feature type="binding site" evidence="1">
    <location>
        <position position="313"/>
    </location>
    <ligand>
        <name>Mg(2+)</name>
        <dbReference type="ChEBI" id="CHEBI:18420"/>
    </ligand>
</feature>
<feature type="binding site" evidence="1">
    <location>
        <position position="338"/>
    </location>
    <ligand>
        <name>(2R)-2-phosphoglycerate</name>
        <dbReference type="ChEBI" id="CHEBI:58289"/>
    </ligand>
</feature>
<feature type="binding site" evidence="1">
    <location>
        <position position="367"/>
    </location>
    <ligand>
        <name>(2R)-2-phosphoglycerate</name>
        <dbReference type="ChEBI" id="CHEBI:58289"/>
    </ligand>
</feature>
<feature type="binding site" evidence="1">
    <location>
        <position position="368"/>
    </location>
    <ligand>
        <name>(2R)-2-phosphoglycerate</name>
        <dbReference type="ChEBI" id="CHEBI:58289"/>
    </ligand>
</feature>
<feature type="binding site" evidence="1">
    <location>
        <position position="389"/>
    </location>
    <ligand>
        <name>(2R)-2-phosphoglycerate</name>
        <dbReference type="ChEBI" id="CHEBI:58289"/>
    </ligand>
</feature>